<evidence type="ECO:0000255" key="1">
    <source>
        <dbReference type="HAMAP-Rule" id="MF_00244"/>
    </source>
</evidence>
<feature type="chain" id="PRO_1000071840" description="Probable nicotinate-nucleotide adenylyltransferase">
    <location>
        <begin position="1"/>
        <end position="189"/>
    </location>
</feature>
<accession>A6QHD6</accession>
<proteinExistence type="inferred from homology"/>
<comment type="function">
    <text evidence="1">Catalyzes the reversible adenylation of nicotinate mononucleotide (NaMN) to nicotinic acid adenine dinucleotide (NaAD).</text>
</comment>
<comment type="catalytic activity">
    <reaction evidence="1">
        <text>nicotinate beta-D-ribonucleotide + ATP + H(+) = deamido-NAD(+) + diphosphate</text>
        <dbReference type="Rhea" id="RHEA:22860"/>
        <dbReference type="ChEBI" id="CHEBI:15378"/>
        <dbReference type="ChEBI" id="CHEBI:30616"/>
        <dbReference type="ChEBI" id="CHEBI:33019"/>
        <dbReference type="ChEBI" id="CHEBI:57502"/>
        <dbReference type="ChEBI" id="CHEBI:58437"/>
        <dbReference type="EC" id="2.7.7.18"/>
    </reaction>
</comment>
<comment type="pathway">
    <text evidence="1">Cofactor biosynthesis; NAD(+) biosynthesis; deamido-NAD(+) from nicotinate D-ribonucleotide: step 1/1.</text>
</comment>
<comment type="similarity">
    <text evidence="1">Belongs to the NadD family.</text>
</comment>
<dbReference type="EC" id="2.7.7.18" evidence="1"/>
<dbReference type="EMBL" id="AP009351">
    <property type="protein sequence ID" value="BAF67768.1"/>
    <property type="molecule type" value="Genomic_DNA"/>
</dbReference>
<dbReference type="RefSeq" id="WP_000725162.1">
    <property type="nucleotide sequence ID" value="NZ_JBBIAE010000001.1"/>
</dbReference>
<dbReference type="SMR" id="A6QHD6"/>
<dbReference type="KEGG" id="sae:NWMN_1496"/>
<dbReference type="HOGENOM" id="CLU_069765_3_1_9"/>
<dbReference type="UniPathway" id="UPA00253">
    <property type="reaction ID" value="UER00332"/>
</dbReference>
<dbReference type="Proteomes" id="UP000006386">
    <property type="component" value="Chromosome"/>
</dbReference>
<dbReference type="GO" id="GO:0005524">
    <property type="term" value="F:ATP binding"/>
    <property type="evidence" value="ECO:0007669"/>
    <property type="project" value="UniProtKB-KW"/>
</dbReference>
<dbReference type="GO" id="GO:0004515">
    <property type="term" value="F:nicotinate-nucleotide adenylyltransferase activity"/>
    <property type="evidence" value="ECO:0007669"/>
    <property type="project" value="UniProtKB-UniRule"/>
</dbReference>
<dbReference type="GO" id="GO:0009435">
    <property type="term" value="P:NAD biosynthetic process"/>
    <property type="evidence" value="ECO:0007669"/>
    <property type="project" value="UniProtKB-UniRule"/>
</dbReference>
<dbReference type="CDD" id="cd02165">
    <property type="entry name" value="NMNAT"/>
    <property type="match status" value="1"/>
</dbReference>
<dbReference type="FunFam" id="3.40.50.620:FF:000189">
    <property type="entry name" value="Probable nicotinate-nucleotide adenylyltransferase"/>
    <property type="match status" value="1"/>
</dbReference>
<dbReference type="Gene3D" id="3.40.50.620">
    <property type="entry name" value="HUPs"/>
    <property type="match status" value="1"/>
</dbReference>
<dbReference type="HAMAP" id="MF_00244">
    <property type="entry name" value="NaMN_adenylyltr"/>
    <property type="match status" value="1"/>
</dbReference>
<dbReference type="InterPro" id="IPR004821">
    <property type="entry name" value="Cyt_trans-like"/>
</dbReference>
<dbReference type="InterPro" id="IPR005248">
    <property type="entry name" value="NadD/NMNAT"/>
</dbReference>
<dbReference type="InterPro" id="IPR014729">
    <property type="entry name" value="Rossmann-like_a/b/a_fold"/>
</dbReference>
<dbReference type="NCBIfam" id="TIGR00482">
    <property type="entry name" value="nicotinate (nicotinamide) nucleotide adenylyltransferase"/>
    <property type="match status" value="1"/>
</dbReference>
<dbReference type="NCBIfam" id="NF000840">
    <property type="entry name" value="PRK00071.1-3"/>
    <property type="match status" value="1"/>
</dbReference>
<dbReference type="NCBIfam" id="NF000841">
    <property type="entry name" value="PRK00071.1-4"/>
    <property type="match status" value="1"/>
</dbReference>
<dbReference type="PANTHER" id="PTHR39321">
    <property type="entry name" value="NICOTINATE-NUCLEOTIDE ADENYLYLTRANSFERASE-RELATED"/>
    <property type="match status" value="1"/>
</dbReference>
<dbReference type="PANTHER" id="PTHR39321:SF3">
    <property type="entry name" value="PHOSPHOPANTETHEINE ADENYLYLTRANSFERASE"/>
    <property type="match status" value="1"/>
</dbReference>
<dbReference type="Pfam" id="PF01467">
    <property type="entry name" value="CTP_transf_like"/>
    <property type="match status" value="1"/>
</dbReference>
<dbReference type="SUPFAM" id="SSF52374">
    <property type="entry name" value="Nucleotidylyl transferase"/>
    <property type="match status" value="1"/>
</dbReference>
<keyword id="KW-0067">ATP-binding</keyword>
<keyword id="KW-0520">NAD</keyword>
<keyword id="KW-0547">Nucleotide-binding</keyword>
<keyword id="KW-0548">Nucleotidyltransferase</keyword>
<keyword id="KW-0662">Pyridine nucleotide biosynthesis</keyword>
<keyword id="KW-0808">Transferase</keyword>
<name>NADD_STAAE</name>
<reference key="1">
    <citation type="journal article" date="2008" name="J. Bacteriol.">
        <title>Genome sequence of Staphylococcus aureus strain Newman and comparative analysis of staphylococcal genomes: polymorphism and evolution of two major pathogenicity islands.</title>
        <authorList>
            <person name="Baba T."/>
            <person name="Bae T."/>
            <person name="Schneewind O."/>
            <person name="Takeuchi F."/>
            <person name="Hiramatsu K."/>
        </authorList>
    </citation>
    <scope>NUCLEOTIDE SEQUENCE [LARGE SCALE GENOMIC DNA]</scope>
    <source>
        <strain>Newman</strain>
    </source>
</reference>
<sequence>MKKIVLYGGQFNPIHTAHMIVASEVFHELQPDEFYFLPSFMSPLKKHHDFIDVQHRLTMIQMIIDELGFGDICDDEIKRGGQSYTYDTIKAFKEQHKDSELYFVIGTDQYNQLEKWYQIEYLKEMVTFVVVNRDKNSQNVENAMIAIQIPRVDISSTMIRQRVSEGKSIQVLVPKSVENYIKGEGLYEH</sequence>
<protein>
    <recommendedName>
        <fullName evidence="1">Probable nicotinate-nucleotide adenylyltransferase</fullName>
        <ecNumber evidence="1">2.7.7.18</ecNumber>
    </recommendedName>
    <alternativeName>
        <fullName evidence="1">Deamido-NAD(+) diphosphorylase</fullName>
    </alternativeName>
    <alternativeName>
        <fullName evidence="1">Deamido-NAD(+) pyrophosphorylase</fullName>
    </alternativeName>
    <alternativeName>
        <fullName evidence="1">Nicotinate mononucleotide adenylyltransferase</fullName>
        <shortName evidence="1">NaMN adenylyltransferase</shortName>
    </alternativeName>
</protein>
<gene>
    <name evidence="1" type="primary">nadD</name>
    <name type="ordered locus">NWMN_1496</name>
</gene>
<organism>
    <name type="scientific">Staphylococcus aureus (strain Newman)</name>
    <dbReference type="NCBI Taxonomy" id="426430"/>
    <lineage>
        <taxon>Bacteria</taxon>
        <taxon>Bacillati</taxon>
        <taxon>Bacillota</taxon>
        <taxon>Bacilli</taxon>
        <taxon>Bacillales</taxon>
        <taxon>Staphylococcaceae</taxon>
        <taxon>Staphylococcus</taxon>
    </lineage>
</organism>